<name>TRMD_STAA1</name>
<keyword id="KW-0963">Cytoplasm</keyword>
<keyword id="KW-0489">Methyltransferase</keyword>
<keyword id="KW-0949">S-adenosyl-L-methionine</keyword>
<keyword id="KW-0808">Transferase</keyword>
<keyword id="KW-0819">tRNA processing</keyword>
<gene>
    <name evidence="1" type="primary">trmD</name>
    <name type="ordered locus">SAHV_1230</name>
</gene>
<feature type="chain" id="PRO_1000006525" description="tRNA (guanine-N(1)-)-methyltransferase">
    <location>
        <begin position="1"/>
        <end position="245"/>
    </location>
</feature>
<feature type="binding site" evidence="1">
    <location>
        <position position="111"/>
    </location>
    <ligand>
        <name>S-adenosyl-L-methionine</name>
        <dbReference type="ChEBI" id="CHEBI:59789"/>
    </ligand>
</feature>
<feature type="binding site" evidence="1">
    <location>
        <begin position="131"/>
        <end position="136"/>
    </location>
    <ligand>
        <name>S-adenosyl-L-methionine</name>
        <dbReference type="ChEBI" id="CHEBI:59789"/>
    </ligand>
</feature>
<sequence>MKIDYLTLFPEMFDGVLNHSIMKRAQENNKLQINTVNFRDYAINKHNQVDDYPYGGGQGMVLKPEPVFNAMEDLDVTEQTRVILMCPQGEPFSHQKAVELSKADHIVFICGHYEGYDERIRTHLVTDEISMGDYVLTGGELPAMTMTDAIVRLIPGVLGNEQSHQDDSFSDGLLEFPQYTRPREFKGLTVPDVLLSGNHANIDAWRHEQKLIRTYNKRPDLIEKYPLTNEDKQILERYKIGLKKG</sequence>
<comment type="function">
    <text evidence="1">Specifically methylates guanosine-37 in various tRNAs.</text>
</comment>
<comment type="catalytic activity">
    <reaction evidence="1">
        <text>guanosine(37) in tRNA + S-adenosyl-L-methionine = N(1)-methylguanosine(37) in tRNA + S-adenosyl-L-homocysteine + H(+)</text>
        <dbReference type="Rhea" id="RHEA:36899"/>
        <dbReference type="Rhea" id="RHEA-COMP:10145"/>
        <dbReference type="Rhea" id="RHEA-COMP:10147"/>
        <dbReference type="ChEBI" id="CHEBI:15378"/>
        <dbReference type="ChEBI" id="CHEBI:57856"/>
        <dbReference type="ChEBI" id="CHEBI:59789"/>
        <dbReference type="ChEBI" id="CHEBI:73542"/>
        <dbReference type="ChEBI" id="CHEBI:74269"/>
        <dbReference type="EC" id="2.1.1.228"/>
    </reaction>
</comment>
<comment type="subunit">
    <text evidence="1">Homodimer.</text>
</comment>
<comment type="subcellular location">
    <subcellularLocation>
        <location evidence="1">Cytoplasm</location>
    </subcellularLocation>
</comment>
<comment type="similarity">
    <text evidence="1">Belongs to the RNA methyltransferase TrmD family.</text>
</comment>
<dbReference type="EC" id="2.1.1.228" evidence="1"/>
<dbReference type="EMBL" id="AP009324">
    <property type="protein sequence ID" value="BAF78113.1"/>
    <property type="molecule type" value="Genomic_DNA"/>
</dbReference>
<dbReference type="RefSeq" id="WP_000687330.1">
    <property type="nucleotide sequence ID" value="NC_009782.1"/>
</dbReference>
<dbReference type="SMR" id="A7X1L0"/>
<dbReference type="KEGG" id="saw:SAHV_1230"/>
<dbReference type="HOGENOM" id="CLU_047363_0_1_9"/>
<dbReference type="GO" id="GO:0005829">
    <property type="term" value="C:cytosol"/>
    <property type="evidence" value="ECO:0007669"/>
    <property type="project" value="TreeGrafter"/>
</dbReference>
<dbReference type="GO" id="GO:0052906">
    <property type="term" value="F:tRNA (guanine(37)-N1)-methyltransferase activity"/>
    <property type="evidence" value="ECO:0007669"/>
    <property type="project" value="UniProtKB-UniRule"/>
</dbReference>
<dbReference type="GO" id="GO:0002939">
    <property type="term" value="P:tRNA N1-guanine methylation"/>
    <property type="evidence" value="ECO:0007669"/>
    <property type="project" value="TreeGrafter"/>
</dbReference>
<dbReference type="CDD" id="cd18080">
    <property type="entry name" value="TrmD-like"/>
    <property type="match status" value="1"/>
</dbReference>
<dbReference type="FunFam" id="1.10.1270.20:FF:000001">
    <property type="entry name" value="tRNA (guanine-N(1)-)-methyltransferase"/>
    <property type="match status" value="1"/>
</dbReference>
<dbReference type="FunFam" id="3.40.1280.10:FF:000001">
    <property type="entry name" value="tRNA (guanine-N(1)-)-methyltransferase"/>
    <property type="match status" value="1"/>
</dbReference>
<dbReference type="Gene3D" id="3.40.1280.10">
    <property type="match status" value="1"/>
</dbReference>
<dbReference type="Gene3D" id="1.10.1270.20">
    <property type="entry name" value="tRNA(m1g37)methyltransferase, domain 2"/>
    <property type="match status" value="1"/>
</dbReference>
<dbReference type="HAMAP" id="MF_00605">
    <property type="entry name" value="TrmD"/>
    <property type="match status" value="1"/>
</dbReference>
<dbReference type="InterPro" id="IPR029028">
    <property type="entry name" value="Alpha/beta_knot_MTases"/>
</dbReference>
<dbReference type="InterPro" id="IPR023148">
    <property type="entry name" value="tRNA_m1G_MeTrfase_C_sf"/>
</dbReference>
<dbReference type="InterPro" id="IPR002649">
    <property type="entry name" value="tRNA_m1G_MeTrfase_TrmD"/>
</dbReference>
<dbReference type="InterPro" id="IPR029026">
    <property type="entry name" value="tRNA_m1G_MTases_N"/>
</dbReference>
<dbReference type="InterPro" id="IPR016009">
    <property type="entry name" value="tRNA_MeTrfase_TRMD/TRM10"/>
</dbReference>
<dbReference type="NCBIfam" id="NF000648">
    <property type="entry name" value="PRK00026.1"/>
    <property type="match status" value="1"/>
</dbReference>
<dbReference type="NCBIfam" id="TIGR00088">
    <property type="entry name" value="trmD"/>
    <property type="match status" value="1"/>
</dbReference>
<dbReference type="PANTHER" id="PTHR46417">
    <property type="entry name" value="TRNA (GUANINE-N(1)-)-METHYLTRANSFERASE"/>
    <property type="match status" value="1"/>
</dbReference>
<dbReference type="PANTHER" id="PTHR46417:SF1">
    <property type="entry name" value="TRNA (GUANINE-N(1)-)-METHYLTRANSFERASE"/>
    <property type="match status" value="1"/>
</dbReference>
<dbReference type="Pfam" id="PF01746">
    <property type="entry name" value="tRNA_m1G_MT"/>
    <property type="match status" value="1"/>
</dbReference>
<dbReference type="PIRSF" id="PIRSF000386">
    <property type="entry name" value="tRNA_mtase"/>
    <property type="match status" value="1"/>
</dbReference>
<dbReference type="SUPFAM" id="SSF75217">
    <property type="entry name" value="alpha/beta knot"/>
    <property type="match status" value="1"/>
</dbReference>
<organism>
    <name type="scientific">Staphylococcus aureus (strain Mu3 / ATCC 700698)</name>
    <dbReference type="NCBI Taxonomy" id="418127"/>
    <lineage>
        <taxon>Bacteria</taxon>
        <taxon>Bacillati</taxon>
        <taxon>Bacillota</taxon>
        <taxon>Bacilli</taxon>
        <taxon>Bacillales</taxon>
        <taxon>Staphylococcaceae</taxon>
        <taxon>Staphylococcus</taxon>
    </lineage>
</organism>
<protein>
    <recommendedName>
        <fullName evidence="1">tRNA (guanine-N(1)-)-methyltransferase</fullName>
        <ecNumber evidence="1">2.1.1.228</ecNumber>
    </recommendedName>
    <alternativeName>
        <fullName evidence="1">M1G-methyltransferase</fullName>
    </alternativeName>
    <alternativeName>
        <fullName evidence="1">tRNA [GM37] methyltransferase</fullName>
    </alternativeName>
</protein>
<accession>A7X1L0</accession>
<reference key="1">
    <citation type="journal article" date="2008" name="Antimicrob. Agents Chemother.">
        <title>Mutated response regulator graR is responsible for phenotypic conversion of Staphylococcus aureus from heterogeneous vancomycin-intermediate resistance to vancomycin-intermediate resistance.</title>
        <authorList>
            <person name="Neoh H.-M."/>
            <person name="Cui L."/>
            <person name="Yuzawa H."/>
            <person name="Takeuchi F."/>
            <person name="Matsuo M."/>
            <person name="Hiramatsu K."/>
        </authorList>
    </citation>
    <scope>NUCLEOTIDE SEQUENCE [LARGE SCALE GENOMIC DNA]</scope>
    <source>
        <strain>Mu3 / ATCC 700698</strain>
    </source>
</reference>
<proteinExistence type="inferred from homology"/>
<evidence type="ECO:0000255" key="1">
    <source>
        <dbReference type="HAMAP-Rule" id="MF_00605"/>
    </source>
</evidence>